<sequence>MNPVSYINDEQQGDLLLFVYVQPKASRDQIVGLYGNELKIAITAPPIDGKANAYLSKYLAKACKVAKSQVHIIKGEQGRHKQIRISQPQVIPPEIAALLSPFSL</sequence>
<proteinExistence type="inferred from homology"/>
<dbReference type="EMBL" id="CP000447">
    <property type="protein sequence ID" value="ABI72702.1"/>
    <property type="molecule type" value="Genomic_DNA"/>
</dbReference>
<dbReference type="RefSeq" id="WP_011638311.1">
    <property type="nucleotide sequence ID" value="NC_008345.1"/>
</dbReference>
<dbReference type="SMR" id="Q07Z62"/>
<dbReference type="STRING" id="318167.Sfri_2863"/>
<dbReference type="KEGG" id="sfr:Sfri_2863"/>
<dbReference type="eggNOG" id="COG1872">
    <property type="taxonomic scope" value="Bacteria"/>
</dbReference>
<dbReference type="HOGENOM" id="CLU_130694_3_1_6"/>
<dbReference type="OrthoDB" id="9800587at2"/>
<dbReference type="Proteomes" id="UP000000684">
    <property type="component" value="Chromosome"/>
</dbReference>
<dbReference type="GO" id="GO:0005737">
    <property type="term" value="C:cytoplasm"/>
    <property type="evidence" value="ECO:0007669"/>
    <property type="project" value="TreeGrafter"/>
</dbReference>
<dbReference type="Gene3D" id="3.30.1200.10">
    <property type="entry name" value="YggU-like"/>
    <property type="match status" value="1"/>
</dbReference>
<dbReference type="HAMAP" id="MF_00634">
    <property type="entry name" value="UPF0235"/>
    <property type="match status" value="1"/>
</dbReference>
<dbReference type="InterPro" id="IPR003746">
    <property type="entry name" value="DUF167"/>
</dbReference>
<dbReference type="InterPro" id="IPR036591">
    <property type="entry name" value="YggU-like_sf"/>
</dbReference>
<dbReference type="NCBIfam" id="TIGR00251">
    <property type="entry name" value="DUF167 family protein"/>
    <property type="match status" value="1"/>
</dbReference>
<dbReference type="NCBIfam" id="NF003466">
    <property type="entry name" value="PRK05090.1"/>
    <property type="match status" value="1"/>
</dbReference>
<dbReference type="PANTHER" id="PTHR13420">
    <property type="entry name" value="UPF0235 PROTEIN C15ORF40"/>
    <property type="match status" value="1"/>
</dbReference>
<dbReference type="PANTHER" id="PTHR13420:SF7">
    <property type="entry name" value="UPF0235 PROTEIN C15ORF40"/>
    <property type="match status" value="1"/>
</dbReference>
<dbReference type="Pfam" id="PF02594">
    <property type="entry name" value="DUF167"/>
    <property type="match status" value="1"/>
</dbReference>
<dbReference type="SMART" id="SM01152">
    <property type="entry name" value="DUF167"/>
    <property type="match status" value="1"/>
</dbReference>
<dbReference type="SUPFAM" id="SSF69786">
    <property type="entry name" value="YggU-like"/>
    <property type="match status" value="1"/>
</dbReference>
<feature type="chain" id="PRO_1000082651" description="UPF0235 protein Sfri_2863">
    <location>
        <begin position="1"/>
        <end position="104"/>
    </location>
</feature>
<name>Y2863_SHEFN</name>
<reference key="1">
    <citation type="submission" date="2006-08" db="EMBL/GenBank/DDBJ databases">
        <title>Complete sequence of Shewanella frigidimarina NCIMB 400.</title>
        <authorList>
            <consortium name="US DOE Joint Genome Institute"/>
            <person name="Copeland A."/>
            <person name="Lucas S."/>
            <person name="Lapidus A."/>
            <person name="Barry K."/>
            <person name="Detter J.C."/>
            <person name="Glavina del Rio T."/>
            <person name="Hammon N."/>
            <person name="Israni S."/>
            <person name="Dalin E."/>
            <person name="Tice H."/>
            <person name="Pitluck S."/>
            <person name="Fredrickson J.K."/>
            <person name="Kolker E."/>
            <person name="McCuel L.A."/>
            <person name="DiChristina T."/>
            <person name="Nealson K.H."/>
            <person name="Newman D."/>
            <person name="Tiedje J.M."/>
            <person name="Zhou J."/>
            <person name="Romine M.F."/>
            <person name="Culley D.E."/>
            <person name="Serres M."/>
            <person name="Chertkov O."/>
            <person name="Brettin T."/>
            <person name="Bruce D."/>
            <person name="Han C."/>
            <person name="Tapia R."/>
            <person name="Gilna P."/>
            <person name="Schmutz J."/>
            <person name="Larimer F."/>
            <person name="Land M."/>
            <person name="Hauser L."/>
            <person name="Kyrpides N."/>
            <person name="Mikhailova N."/>
            <person name="Richardson P."/>
        </authorList>
    </citation>
    <scope>NUCLEOTIDE SEQUENCE [LARGE SCALE GENOMIC DNA]</scope>
    <source>
        <strain>NCIMB 400</strain>
    </source>
</reference>
<keyword id="KW-1185">Reference proteome</keyword>
<accession>Q07Z62</accession>
<comment type="similarity">
    <text evidence="1">Belongs to the UPF0235 family.</text>
</comment>
<evidence type="ECO:0000255" key="1">
    <source>
        <dbReference type="HAMAP-Rule" id="MF_00634"/>
    </source>
</evidence>
<organism>
    <name type="scientific">Shewanella frigidimarina (strain NCIMB 400)</name>
    <dbReference type="NCBI Taxonomy" id="318167"/>
    <lineage>
        <taxon>Bacteria</taxon>
        <taxon>Pseudomonadati</taxon>
        <taxon>Pseudomonadota</taxon>
        <taxon>Gammaproteobacteria</taxon>
        <taxon>Alteromonadales</taxon>
        <taxon>Shewanellaceae</taxon>
        <taxon>Shewanella</taxon>
    </lineage>
</organism>
<protein>
    <recommendedName>
        <fullName evidence="1">UPF0235 protein Sfri_2863</fullName>
    </recommendedName>
</protein>
<gene>
    <name type="ordered locus">Sfri_2863</name>
</gene>